<protein>
    <recommendedName>
        <fullName>Zinc metalloproteinase/disintegrin</fullName>
    </recommendedName>
    <component>
        <recommendedName>
            <fullName>Snake venom metalloproteinase</fullName>
            <shortName>SVMP</shortName>
            <ecNumber>3.4.24.-</ecNumber>
        </recommendedName>
    </component>
    <component>
        <recommendedName>
            <fullName>Disintegrin halystatin-2</fullName>
        </recommendedName>
    </component>
</protein>
<reference key="1">
    <citation type="journal article" date="1994" name="Takeda Kenkyusho Ho">
        <title>Halystatin, a novel disintegrin from agkistrodon halys, is a potent inhibitor of bone resorption and platelet aggregation.</title>
        <authorList>
            <person name="Fujisawa Y."/>
            <person name="Kuroda S."/>
            <person name="Notoya K."/>
            <person name="Konishi H."/>
            <person name="Terashita Z."/>
        </authorList>
    </citation>
    <scope>NUCLEOTIDE SEQUENCE [GENOMIC DNA]</scope>
    <source>
        <tissue>Liver</tissue>
    </source>
</reference>
<organism>
    <name type="scientific">Gloydius halys</name>
    <name type="common">Chinese water mocassin</name>
    <name type="synonym">Agkistrodon halys</name>
    <dbReference type="NCBI Taxonomy" id="8714"/>
    <lineage>
        <taxon>Eukaryota</taxon>
        <taxon>Metazoa</taxon>
        <taxon>Chordata</taxon>
        <taxon>Craniata</taxon>
        <taxon>Vertebrata</taxon>
        <taxon>Euteleostomi</taxon>
        <taxon>Lepidosauria</taxon>
        <taxon>Squamata</taxon>
        <taxon>Bifurcata</taxon>
        <taxon>Unidentata</taxon>
        <taxon>Episquamata</taxon>
        <taxon>Toxicofera</taxon>
        <taxon>Serpentes</taxon>
        <taxon>Colubroidea</taxon>
        <taxon>Viperidae</taxon>
        <taxon>Crotalinae</taxon>
        <taxon>Gloydius</taxon>
    </lineage>
</organism>
<comment type="function">
    <molecule>Snake venom metalloproteinase</molecule>
    <text evidence="1">Impairs hemostasis in the envenomed animal.</text>
</comment>
<comment type="function">
    <molecule>Disintegrin halystatin-2</molecule>
    <text evidence="1">Inhibits platelet aggregation and bone resorption.</text>
</comment>
<comment type="cofactor">
    <cofactor evidence="1">
        <name>Zn(2+)</name>
        <dbReference type="ChEBI" id="CHEBI:29105"/>
    </cofactor>
    <text evidence="1">Binds 1 zinc ion per subunit.</text>
</comment>
<comment type="subunit">
    <text evidence="1">Monomer.</text>
</comment>
<comment type="subcellular location">
    <subcellularLocation>
        <location evidence="1">Secreted</location>
    </subcellularLocation>
</comment>
<comment type="tissue specificity">
    <text>Expressed by the venom gland.</text>
</comment>
<comment type="miscellaneous">
    <text>The disintegrin belongs to the medium disintegrin subfamily.</text>
</comment>
<comment type="similarity">
    <text evidence="4">Belongs to the venom metalloproteinase (M12B) family. P-II subfamily. P-IIa sub-subfamily.</text>
</comment>
<name>VM2H2_GLOHA</name>
<accession>Q90221</accession>
<keyword id="KW-1217">Cell adhesion impairing toxin</keyword>
<keyword id="KW-1015">Disulfide bond</keyword>
<keyword id="KW-1199">Hemostasis impairing toxin</keyword>
<keyword id="KW-0378">Hydrolase</keyword>
<keyword id="KW-0479">Metal-binding</keyword>
<keyword id="KW-0482">Metalloprotease</keyword>
<keyword id="KW-1201">Platelet aggregation inhibiting toxin</keyword>
<keyword id="KW-0645">Protease</keyword>
<keyword id="KW-0964">Secreted</keyword>
<keyword id="KW-0800">Toxin</keyword>
<keyword id="KW-0862">Zinc</keyword>
<keyword id="KW-0865">Zymogen</keyword>
<sequence length="117" mass="12686">SYEFSDCNENEYQTYVTDHSPQCILNDPLRPDTVSTPVSGNELLEAGEDCDCGAPANPCCDAATCKLRPGAQCAEGLCCDQCRFMKEGTICRMARGDDMDDYCNGISAGCPRNPFHA</sequence>
<feature type="chain" id="PRO_0000424451" description="Snake venom metalloproteinase">
    <location>
        <begin position="1" status="less than"/>
        <end position="44"/>
    </location>
</feature>
<feature type="chain" id="PRO_0000424452" description="Disintegrin halystatin-2">
    <location>
        <begin position="45"/>
        <end position="117"/>
    </location>
</feature>
<feature type="domain" description="Disintegrin" evidence="3">
    <location>
        <begin position="36"/>
        <end position="117"/>
    </location>
</feature>
<feature type="short sequence motif" description="Cell attachment site">
    <location>
        <begin position="95"/>
        <end position="97"/>
    </location>
</feature>
<feature type="disulfide bond" evidence="2">
    <location>
        <begin position="50"/>
        <end position="65"/>
    </location>
</feature>
<feature type="disulfide bond" evidence="2">
    <location>
        <begin position="52"/>
        <end position="60"/>
    </location>
</feature>
<feature type="disulfide bond" evidence="2">
    <location>
        <begin position="59"/>
        <end position="82"/>
    </location>
</feature>
<feature type="disulfide bond" evidence="2">
    <location>
        <begin position="73"/>
        <end position="79"/>
    </location>
</feature>
<feature type="disulfide bond" evidence="2">
    <location>
        <begin position="78"/>
        <end position="103"/>
    </location>
</feature>
<feature type="disulfide bond" evidence="2 3">
    <location>
        <begin position="91"/>
        <end position="110"/>
    </location>
</feature>
<feature type="non-terminal residue" evidence="5">
    <location>
        <position position="1"/>
    </location>
</feature>
<evidence type="ECO:0000250" key="1"/>
<evidence type="ECO:0000250" key="2">
    <source>
        <dbReference type="UniProtKB" id="Q0NZX5"/>
    </source>
</evidence>
<evidence type="ECO:0000255" key="3">
    <source>
        <dbReference type="PROSITE-ProRule" id="PRU00068"/>
    </source>
</evidence>
<evidence type="ECO:0000305" key="4"/>
<evidence type="ECO:0000305" key="5">
    <source ref="1"/>
</evidence>
<proteinExistence type="evidence at transcript level"/>
<dbReference type="EC" id="3.4.24.-"/>
<dbReference type="EMBL" id="D28871">
    <property type="protein sequence ID" value="BAA06027.1"/>
    <property type="molecule type" value="Genomic_DNA"/>
</dbReference>
<dbReference type="SMR" id="Q90221"/>
<dbReference type="GO" id="GO:0005576">
    <property type="term" value="C:extracellular region"/>
    <property type="evidence" value="ECO:0007669"/>
    <property type="project" value="UniProtKB-SubCell"/>
</dbReference>
<dbReference type="GO" id="GO:0005886">
    <property type="term" value="C:plasma membrane"/>
    <property type="evidence" value="ECO:0007669"/>
    <property type="project" value="TreeGrafter"/>
</dbReference>
<dbReference type="GO" id="GO:0046872">
    <property type="term" value="F:metal ion binding"/>
    <property type="evidence" value="ECO:0007669"/>
    <property type="project" value="UniProtKB-KW"/>
</dbReference>
<dbReference type="GO" id="GO:0004222">
    <property type="term" value="F:metalloendopeptidase activity"/>
    <property type="evidence" value="ECO:0007669"/>
    <property type="project" value="InterPro"/>
</dbReference>
<dbReference type="GO" id="GO:0090729">
    <property type="term" value="F:toxin activity"/>
    <property type="evidence" value="ECO:0007669"/>
    <property type="project" value="UniProtKB-KW"/>
</dbReference>
<dbReference type="GO" id="GO:0006508">
    <property type="term" value="P:proteolysis"/>
    <property type="evidence" value="ECO:0007669"/>
    <property type="project" value="UniProtKB-KW"/>
</dbReference>
<dbReference type="FunFam" id="4.10.70.10:FF:000005">
    <property type="entry name" value="Zinc metalloproteinase/disintegrin"/>
    <property type="match status" value="1"/>
</dbReference>
<dbReference type="Gene3D" id="4.10.70.10">
    <property type="entry name" value="Disintegrin domain"/>
    <property type="match status" value="1"/>
</dbReference>
<dbReference type="InterPro" id="IPR018358">
    <property type="entry name" value="Disintegrin_CS"/>
</dbReference>
<dbReference type="InterPro" id="IPR001762">
    <property type="entry name" value="Disintegrin_dom"/>
</dbReference>
<dbReference type="InterPro" id="IPR036436">
    <property type="entry name" value="Disintegrin_dom_sf"/>
</dbReference>
<dbReference type="InterPro" id="IPR001590">
    <property type="entry name" value="Peptidase_M12B"/>
</dbReference>
<dbReference type="PANTHER" id="PTHR11905">
    <property type="entry name" value="ADAM A DISINTEGRIN AND METALLOPROTEASE DOMAIN"/>
    <property type="match status" value="1"/>
</dbReference>
<dbReference type="PANTHER" id="PTHR11905:SF32">
    <property type="entry name" value="DISINTEGRIN AND METALLOPROTEINASE DOMAIN-CONTAINING PROTEIN 28"/>
    <property type="match status" value="1"/>
</dbReference>
<dbReference type="Pfam" id="PF00200">
    <property type="entry name" value="Disintegrin"/>
    <property type="match status" value="1"/>
</dbReference>
<dbReference type="PRINTS" id="PR00289">
    <property type="entry name" value="DISINTEGRIN"/>
</dbReference>
<dbReference type="SMART" id="SM00050">
    <property type="entry name" value="DISIN"/>
    <property type="match status" value="1"/>
</dbReference>
<dbReference type="SUPFAM" id="SSF57552">
    <property type="entry name" value="Blood coagulation inhibitor (disintegrin)"/>
    <property type="match status" value="1"/>
</dbReference>
<dbReference type="PROSITE" id="PS50215">
    <property type="entry name" value="ADAM_MEPRO"/>
    <property type="match status" value="1"/>
</dbReference>
<dbReference type="PROSITE" id="PS00427">
    <property type="entry name" value="DISINTEGRIN_1"/>
    <property type="match status" value="1"/>
</dbReference>
<dbReference type="PROSITE" id="PS50214">
    <property type="entry name" value="DISINTEGRIN_2"/>
    <property type="match status" value="1"/>
</dbReference>